<proteinExistence type="inferred from homology"/>
<name>CH60_PSEPW</name>
<gene>
    <name evidence="1" type="primary">groEL</name>
    <name evidence="1" type="synonym">groL</name>
    <name type="ordered locus">PputW619_0968</name>
</gene>
<dbReference type="EC" id="5.6.1.7" evidence="1"/>
<dbReference type="EMBL" id="CP000949">
    <property type="protein sequence ID" value="ACA71473.1"/>
    <property type="molecule type" value="Genomic_DNA"/>
</dbReference>
<dbReference type="SMR" id="B1J3K5"/>
<dbReference type="STRING" id="390235.PputW619_0968"/>
<dbReference type="KEGG" id="ppw:PputW619_0968"/>
<dbReference type="eggNOG" id="COG0459">
    <property type="taxonomic scope" value="Bacteria"/>
</dbReference>
<dbReference type="HOGENOM" id="CLU_016503_3_0_6"/>
<dbReference type="OrthoDB" id="9766614at2"/>
<dbReference type="GO" id="GO:0005737">
    <property type="term" value="C:cytoplasm"/>
    <property type="evidence" value="ECO:0007669"/>
    <property type="project" value="UniProtKB-SubCell"/>
</dbReference>
<dbReference type="GO" id="GO:0005524">
    <property type="term" value="F:ATP binding"/>
    <property type="evidence" value="ECO:0007669"/>
    <property type="project" value="UniProtKB-UniRule"/>
</dbReference>
<dbReference type="GO" id="GO:0140662">
    <property type="term" value="F:ATP-dependent protein folding chaperone"/>
    <property type="evidence" value="ECO:0007669"/>
    <property type="project" value="InterPro"/>
</dbReference>
<dbReference type="GO" id="GO:0016853">
    <property type="term" value="F:isomerase activity"/>
    <property type="evidence" value="ECO:0007669"/>
    <property type="project" value="UniProtKB-KW"/>
</dbReference>
<dbReference type="GO" id="GO:0051082">
    <property type="term" value="F:unfolded protein binding"/>
    <property type="evidence" value="ECO:0007669"/>
    <property type="project" value="UniProtKB-UniRule"/>
</dbReference>
<dbReference type="GO" id="GO:0042026">
    <property type="term" value="P:protein refolding"/>
    <property type="evidence" value="ECO:0007669"/>
    <property type="project" value="UniProtKB-UniRule"/>
</dbReference>
<dbReference type="CDD" id="cd03344">
    <property type="entry name" value="GroEL"/>
    <property type="match status" value="1"/>
</dbReference>
<dbReference type="FunFam" id="1.10.560.10:FF:000001">
    <property type="entry name" value="60 kDa chaperonin"/>
    <property type="match status" value="1"/>
</dbReference>
<dbReference type="FunFam" id="3.50.7.10:FF:000001">
    <property type="entry name" value="60 kDa chaperonin"/>
    <property type="match status" value="1"/>
</dbReference>
<dbReference type="Gene3D" id="3.50.7.10">
    <property type="entry name" value="GroEL"/>
    <property type="match status" value="1"/>
</dbReference>
<dbReference type="Gene3D" id="1.10.560.10">
    <property type="entry name" value="GroEL-like equatorial domain"/>
    <property type="match status" value="1"/>
</dbReference>
<dbReference type="Gene3D" id="3.30.260.10">
    <property type="entry name" value="TCP-1-like chaperonin intermediate domain"/>
    <property type="match status" value="1"/>
</dbReference>
<dbReference type="HAMAP" id="MF_00600">
    <property type="entry name" value="CH60"/>
    <property type="match status" value="1"/>
</dbReference>
<dbReference type="InterPro" id="IPR018370">
    <property type="entry name" value="Chaperonin_Cpn60_CS"/>
</dbReference>
<dbReference type="InterPro" id="IPR001844">
    <property type="entry name" value="Cpn60/GroEL"/>
</dbReference>
<dbReference type="InterPro" id="IPR002423">
    <property type="entry name" value="Cpn60/GroEL/TCP-1"/>
</dbReference>
<dbReference type="InterPro" id="IPR027409">
    <property type="entry name" value="GroEL-like_apical_dom_sf"/>
</dbReference>
<dbReference type="InterPro" id="IPR027413">
    <property type="entry name" value="GROEL-like_equatorial_sf"/>
</dbReference>
<dbReference type="InterPro" id="IPR027410">
    <property type="entry name" value="TCP-1-like_intermed_sf"/>
</dbReference>
<dbReference type="NCBIfam" id="TIGR02348">
    <property type="entry name" value="GroEL"/>
    <property type="match status" value="1"/>
</dbReference>
<dbReference type="NCBIfam" id="NF000592">
    <property type="entry name" value="PRK00013.1"/>
    <property type="match status" value="1"/>
</dbReference>
<dbReference type="NCBIfam" id="NF009487">
    <property type="entry name" value="PRK12849.1"/>
    <property type="match status" value="1"/>
</dbReference>
<dbReference type="NCBIfam" id="NF009488">
    <property type="entry name" value="PRK12850.1"/>
    <property type="match status" value="1"/>
</dbReference>
<dbReference type="NCBIfam" id="NF009489">
    <property type="entry name" value="PRK12851.1"/>
    <property type="match status" value="1"/>
</dbReference>
<dbReference type="PANTHER" id="PTHR45633">
    <property type="entry name" value="60 KDA HEAT SHOCK PROTEIN, MITOCHONDRIAL"/>
    <property type="match status" value="1"/>
</dbReference>
<dbReference type="Pfam" id="PF00118">
    <property type="entry name" value="Cpn60_TCP1"/>
    <property type="match status" value="1"/>
</dbReference>
<dbReference type="PRINTS" id="PR00298">
    <property type="entry name" value="CHAPERONIN60"/>
</dbReference>
<dbReference type="SUPFAM" id="SSF52029">
    <property type="entry name" value="GroEL apical domain-like"/>
    <property type="match status" value="1"/>
</dbReference>
<dbReference type="SUPFAM" id="SSF48592">
    <property type="entry name" value="GroEL equatorial domain-like"/>
    <property type="match status" value="1"/>
</dbReference>
<dbReference type="SUPFAM" id="SSF54849">
    <property type="entry name" value="GroEL-intermediate domain like"/>
    <property type="match status" value="1"/>
</dbReference>
<dbReference type="PROSITE" id="PS00296">
    <property type="entry name" value="CHAPERONINS_CPN60"/>
    <property type="match status" value="1"/>
</dbReference>
<reference key="1">
    <citation type="submission" date="2008-02" db="EMBL/GenBank/DDBJ databases">
        <title>Complete sequence of Pseudomonas putida W619.</title>
        <authorList>
            <person name="Copeland A."/>
            <person name="Lucas S."/>
            <person name="Lapidus A."/>
            <person name="Barry K."/>
            <person name="Detter J.C."/>
            <person name="Glavina del Rio T."/>
            <person name="Dalin E."/>
            <person name="Tice H."/>
            <person name="Pitluck S."/>
            <person name="Chain P."/>
            <person name="Malfatti S."/>
            <person name="Shin M."/>
            <person name="Vergez L."/>
            <person name="Schmutz J."/>
            <person name="Larimer F."/>
            <person name="Land M."/>
            <person name="Hauser L."/>
            <person name="Kyrpides N."/>
            <person name="Kim E."/>
            <person name="Taghavi S."/>
            <person name="Vangronsveld D."/>
            <person name="van der Lelie D."/>
            <person name="Richardson P."/>
        </authorList>
    </citation>
    <scope>NUCLEOTIDE SEQUENCE [LARGE SCALE GENOMIC DNA]</scope>
    <source>
        <strain>W619</strain>
    </source>
</reference>
<keyword id="KW-0067">ATP-binding</keyword>
<keyword id="KW-0143">Chaperone</keyword>
<keyword id="KW-0963">Cytoplasm</keyword>
<keyword id="KW-0413">Isomerase</keyword>
<keyword id="KW-0547">Nucleotide-binding</keyword>
<accession>B1J3K5</accession>
<evidence type="ECO:0000255" key="1">
    <source>
        <dbReference type="HAMAP-Rule" id="MF_00600"/>
    </source>
</evidence>
<protein>
    <recommendedName>
        <fullName evidence="1">Chaperonin GroEL</fullName>
        <ecNumber evidence="1">5.6.1.7</ecNumber>
    </recommendedName>
    <alternativeName>
        <fullName evidence="1">60 kDa chaperonin</fullName>
    </alternativeName>
    <alternativeName>
        <fullName evidence="1">Chaperonin-60</fullName>
        <shortName evidence="1">Cpn60</shortName>
    </alternativeName>
</protein>
<organism>
    <name type="scientific">Pseudomonas putida (strain W619)</name>
    <dbReference type="NCBI Taxonomy" id="390235"/>
    <lineage>
        <taxon>Bacteria</taxon>
        <taxon>Pseudomonadati</taxon>
        <taxon>Pseudomonadota</taxon>
        <taxon>Gammaproteobacteria</taxon>
        <taxon>Pseudomonadales</taxon>
        <taxon>Pseudomonadaceae</taxon>
        <taxon>Pseudomonas</taxon>
    </lineage>
</organism>
<sequence>MAAKDVKFGDSARKKMLVGVNVLADAVKATLGPKGRNVVLAKSFGAPTITKDGVSVAKEIELKDAFENMGAQLVKEVASKANDAAGDGTTTATVLAQAIVNEGLKAVAAGMNPMDLKRGIDKATAAVVAELKNLSKPCADSKAIAQVGTISANSDNSIGEIIAEAMEKVGKEGVITVEEGSGLENELSVVEGMQFDRGYLSPYFVNKPDTMVAELESPLLLLVDKKISNIRELLPVLEAVAKAGRPLLIVAEDVEGEALATLVVNNMRGIVKVAAVKAPGFGDRRKAMLQDIAVLTGGQVISEEIGLTLETTTLEHLGNAKRVILSKENTTIIDGAGVDADIEARVKQIRAQIEETSSDYDREKLQERLAKLAGGVAVIKVGAGTEVEMKEKKARVEDALHATRAAVEEGVVPGGGVALVRALAAIVDLKGDNEDQNVGIALLRRAVEAPLRQITANAGDEPSVVADKVKQGSGNYGYNAATGEYGDMIEMGILDPAKVTRSALQAAASIGGLMITTEAMVADLPEDKPAGGMPDMGGMGGMGGMM</sequence>
<comment type="function">
    <text evidence="1">Together with its co-chaperonin GroES, plays an essential role in assisting protein folding. The GroEL-GroES system forms a nano-cage that allows encapsulation of the non-native substrate proteins and provides a physical environment optimized to promote and accelerate protein folding.</text>
</comment>
<comment type="catalytic activity">
    <reaction evidence="1">
        <text>ATP + H2O + a folded polypeptide = ADP + phosphate + an unfolded polypeptide.</text>
        <dbReference type="EC" id="5.6.1.7"/>
    </reaction>
</comment>
<comment type="subunit">
    <text evidence="1">Forms a cylinder of 14 subunits composed of two heptameric rings stacked back-to-back. Interacts with the co-chaperonin GroES.</text>
</comment>
<comment type="subcellular location">
    <subcellularLocation>
        <location evidence="1">Cytoplasm</location>
    </subcellularLocation>
</comment>
<comment type="similarity">
    <text evidence="1">Belongs to the chaperonin (HSP60) family.</text>
</comment>
<feature type="chain" id="PRO_1000130048" description="Chaperonin GroEL">
    <location>
        <begin position="1"/>
        <end position="546"/>
    </location>
</feature>
<feature type="binding site" evidence="1">
    <location>
        <begin position="30"/>
        <end position="33"/>
    </location>
    <ligand>
        <name>ATP</name>
        <dbReference type="ChEBI" id="CHEBI:30616"/>
    </ligand>
</feature>
<feature type="binding site" evidence="1">
    <location>
        <position position="51"/>
    </location>
    <ligand>
        <name>ATP</name>
        <dbReference type="ChEBI" id="CHEBI:30616"/>
    </ligand>
</feature>
<feature type="binding site" evidence="1">
    <location>
        <begin position="87"/>
        <end position="91"/>
    </location>
    <ligand>
        <name>ATP</name>
        <dbReference type="ChEBI" id="CHEBI:30616"/>
    </ligand>
</feature>
<feature type="binding site" evidence="1">
    <location>
        <position position="415"/>
    </location>
    <ligand>
        <name>ATP</name>
        <dbReference type="ChEBI" id="CHEBI:30616"/>
    </ligand>
</feature>
<feature type="binding site" evidence="1">
    <location>
        <begin position="479"/>
        <end position="481"/>
    </location>
    <ligand>
        <name>ATP</name>
        <dbReference type="ChEBI" id="CHEBI:30616"/>
    </ligand>
</feature>
<feature type="binding site" evidence="1">
    <location>
        <position position="495"/>
    </location>
    <ligand>
        <name>ATP</name>
        <dbReference type="ChEBI" id="CHEBI:30616"/>
    </ligand>
</feature>